<feature type="chain" id="PRO_0000298025" description="S-ribosylhomocysteine lyase">
    <location>
        <begin position="1"/>
        <end position="169"/>
    </location>
</feature>
<feature type="binding site" evidence="1">
    <location>
        <position position="54"/>
    </location>
    <ligand>
        <name>Fe cation</name>
        <dbReference type="ChEBI" id="CHEBI:24875"/>
    </ligand>
</feature>
<feature type="binding site" evidence="1">
    <location>
        <position position="58"/>
    </location>
    <ligand>
        <name>Fe cation</name>
        <dbReference type="ChEBI" id="CHEBI:24875"/>
    </ligand>
</feature>
<feature type="binding site" evidence="1">
    <location>
        <position position="128"/>
    </location>
    <ligand>
        <name>Fe cation</name>
        <dbReference type="ChEBI" id="CHEBI:24875"/>
    </ligand>
</feature>
<protein>
    <recommendedName>
        <fullName evidence="1">S-ribosylhomocysteine lyase</fullName>
        <ecNumber evidence="1">4.4.1.21</ecNumber>
    </recommendedName>
    <alternativeName>
        <fullName evidence="1">AI-2 synthesis protein</fullName>
    </alternativeName>
    <alternativeName>
        <fullName evidence="1">Autoinducer-2 production protein LuxS</fullName>
    </alternativeName>
</protein>
<sequence length="169" mass="18998">MPLLDSFTVDHTRMNAPAVRVAKTMTTPKGDTITVFDLRFCVPNKEILSERGIHTLEHLFAGFMRDHLNSDRVEIIDISPMGCRTGFYMSLIGTPKEAEVAECWLAAMEDVLKVKQQSEIPELNEYQCGTYEMHSLEQAKEIAKNIIAAGVNVNRNDDLKLSDEILKGL</sequence>
<name>LUXS_SHELP</name>
<organism>
    <name type="scientific">Shewanella loihica (strain ATCC BAA-1088 / PV-4)</name>
    <dbReference type="NCBI Taxonomy" id="323850"/>
    <lineage>
        <taxon>Bacteria</taxon>
        <taxon>Pseudomonadati</taxon>
        <taxon>Pseudomonadota</taxon>
        <taxon>Gammaproteobacteria</taxon>
        <taxon>Alteromonadales</taxon>
        <taxon>Shewanellaceae</taxon>
        <taxon>Shewanella</taxon>
    </lineage>
</organism>
<gene>
    <name evidence="1" type="primary">luxS</name>
    <name type="ordered locus">Shew_2882</name>
</gene>
<evidence type="ECO:0000255" key="1">
    <source>
        <dbReference type="HAMAP-Rule" id="MF_00091"/>
    </source>
</evidence>
<comment type="function">
    <text evidence="1">Involved in the synthesis of autoinducer 2 (AI-2) which is secreted by bacteria and is used to communicate both the cell density and the metabolic potential of the environment. The regulation of gene expression in response to changes in cell density is called quorum sensing. Catalyzes the transformation of S-ribosylhomocysteine (RHC) to homocysteine (HC) and 4,5-dihydroxy-2,3-pentadione (DPD).</text>
</comment>
<comment type="catalytic activity">
    <reaction evidence="1">
        <text>S-(5-deoxy-D-ribos-5-yl)-L-homocysteine = (S)-4,5-dihydroxypentane-2,3-dione + L-homocysteine</text>
        <dbReference type="Rhea" id="RHEA:17753"/>
        <dbReference type="ChEBI" id="CHEBI:29484"/>
        <dbReference type="ChEBI" id="CHEBI:58195"/>
        <dbReference type="ChEBI" id="CHEBI:58199"/>
        <dbReference type="EC" id="4.4.1.21"/>
    </reaction>
</comment>
<comment type="cofactor">
    <cofactor evidence="1">
        <name>Fe cation</name>
        <dbReference type="ChEBI" id="CHEBI:24875"/>
    </cofactor>
    <text evidence="1">Binds 1 Fe cation per subunit.</text>
</comment>
<comment type="subunit">
    <text evidence="1">Homodimer.</text>
</comment>
<comment type="similarity">
    <text evidence="1">Belongs to the LuxS family.</text>
</comment>
<keyword id="KW-0071">Autoinducer synthesis</keyword>
<keyword id="KW-0408">Iron</keyword>
<keyword id="KW-0456">Lyase</keyword>
<keyword id="KW-0479">Metal-binding</keyword>
<keyword id="KW-0673">Quorum sensing</keyword>
<keyword id="KW-1185">Reference proteome</keyword>
<proteinExistence type="inferred from homology"/>
<dbReference type="EC" id="4.4.1.21" evidence="1"/>
<dbReference type="EMBL" id="CP000606">
    <property type="protein sequence ID" value="ABO24748.1"/>
    <property type="molecule type" value="Genomic_DNA"/>
</dbReference>
<dbReference type="RefSeq" id="WP_011866679.1">
    <property type="nucleotide sequence ID" value="NC_009092.1"/>
</dbReference>
<dbReference type="SMR" id="A3QH00"/>
<dbReference type="STRING" id="323850.Shew_2882"/>
<dbReference type="KEGG" id="slo:Shew_2882"/>
<dbReference type="eggNOG" id="COG1854">
    <property type="taxonomic scope" value="Bacteria"/>
</dbReference>
<dbReference type="HOGENOM" id="CLU_107531_2_0_6"/>
<dbReference type="OrthoDB" id="9788129at2"/>
<dbReference type="Proteomes" id="UP000001558">
    <property type="component" value="Chromosome"/>
</dbReference>
<dbReference type="GO" id="GO:0005506">
    <property type="term" value="F:iron ion binding"/>
    <property type="evidence" value="ECO:0007669"/>
    <property type="project" value="InterPro"/>
</dbReference>
<dbReference type="GO" id="GO:0043768">
    <property type="term" value="F:S-ribosylhomocysteine lyase activity"/>
    <property type="evidence" value="ECO:0007669"/>
    <property type="project" value="UniProtKB-UniRule"/>
</dbReference>
<dbReference type="GO" id="GO:0009372">
    <property type="term" value="P:quorum sensing"/>
    <property type="evidence" value="ECO:0007669"/>
    <property type="project" value="UniProtKB-UniRule"/>
</dbReference>
<dbReference type="FunFam" id="3.30.1360.80:FF:000001">
    <property type="entry name" value="S-ribosylhomocysteine lyase"/>
    <property type="match status" value="1"/>
</dbReference>
<dbReference type="Gene3D" id="3.30.1360.80">
    <property type="entry name" value="S-ribosylhomocysteinase (LuxS)"/>
    <property type="match status" value="1"/>
</dbReference>
<dbReference type="HAMAP" id="MF_00091">
    <property type="entry name" value="LuxS"/>
    <property type="match status" value="1"/>
</dbReference>
<dbReference type="InterPro" id="IPR037005">
    <property type="entry name" value="LuxS_sf"/>
</dbReference>
<dbReference type="InterPro" id="IPR011249">
    <property type="entry name" value="Metalloenz_LuxS/M16"/>
</dbReference>
<dbReference type="InterPro" id="IPR003815">
    <property type="entry name" value="S-ribosylhomocysteinase"/>
</dbReference>
<dbReference type="NCBIfam" id="NF002602">
    <property type="entry name" value="PRK02260.1-2"/>
    <property type="match status" value="1"/>
</dbReference>
<dbReference type="PANTHER" id="PTHR35799">
    <property type="entry name" value="S-RIBOSYLHOMOCYSTEINE LYASE"/>
    <property type="match status" value="1"/>
</dbReference>
<dbReference type="PANTHER" id="PTHR35799:SF1">
    <property type="entry name" value="S-RIBOSYLHOMOCYSTEINE LYASE"/>
    <property type="match status" value="1"/>
</dbReference>
<dbReference type="Pfam" id="PF02664">
    <property type="entry name" value="LuxS"/>
    <property type="match status" value="1"/>
</dbReference>
<dbReference type="PIRSF" id="PIRSF006160">
    <property type="entry name" value="AI2"/>
    <property type="match status" value="1"/>
</dbReference>
<dbReference type="PRINTS" id="PR01487">
    <property type="entry name" value="LUXSPROTEIN"/>
</dbReference>
<dbReference type="SUPFAM" id="SSF63411">
    <property type="entry name" value="LuxS/MPP-like metallohydrolase"/>
    <property type="match status" value="1"/>
</dbReference>
<accession>A3QH00</accession>
<reference key="1">
    <citation type="submission" date="2007-03" db="EMBL/GenBank/DDBJ databases">
        <title>Complete sequence of Shewanella loihica PV-4.</title>
        <authorList>
            <consortium name="US DOE Joint Genome Institute"/>
            <person name="Copeland A."/>
            <person name="Lucas S."/>
            <person name="Lapidus A."/>
            <person name="Barry K."/>
            <person name="Detter J.C."/>
            <person name="Glavina del Rio T."/>
            <person name="Hammon N."/>
            <person name="Israni S."/>
            <person name="Dalin E."/>
            <person name="Tice H."/>
            <person name="Pitluck S."/>
            <person name="Chain P."/>
            <person name="Malfatti S."/>
            <person name="Shin M."/>
            <person name="Vergez L."/>
            <person name="Schmutz J."/>
            <person name="Larimer F."/>
            <person name="Land M."/>
            <person name="Hauser L."/>
            <person name="Kyrpides N."/>
            <person name="Mikhailova N."/>
            <person name="Romine M.F."/>
            <person name="Serres G."/>
            <person name="Fredrickson J."/>
            <person name="Tiedje J."/>
            <person name="Richardson P."/>
        </authorList>
    </citation>
    <scope>NUCLEOTIDE SEQUENCE [LARGE SCALE GENOMIC DNA]</scope>
    <source>
        <strain>ATCC BAA-1088 / PV-4</strain>
    </source>
</reference>